<organism>
    <name type="scientific">Saccharomyces cerevisiae (strain ATCC 204508 / S288c)</name>
    <name type="common">Baker's yeast</name>
    <dbReference type="NCBI Taxonomy" id="559292"/>
    <lineage>
        <taxon>Eukaryota</taxon>
        <taxon>Fungi</taxon>
        <taxon>Dikarya</taxon>
        <taxon>Ascomycota</taxon>
        <taxon>Saccharomycotina</taxon>
        <taxon>Saccharomycetes</taxon>
        <taxon>Saccharomycetales</taxon>
        <taxon>Saccharomycetaceae</taxon>
        <taxon>Saccharomyces</taxon>
    </lineage>
</organism>
<evidence type="ECO:0000255" key="1"/>
<evidence type="ECO:0000256" key="2">
    <source>
        <dbReference type="SAM" id="MobiDB-lite"/>
    </source>
</evidence>
<evidence type="ECO:0000269" key="3">
    <source>
    </source>
</evidence>
<evidence type="ECO:0000269" key="4">
    <source>
    </source>
</evidence>
<evidence type="ECO:0000305" key="5"/>
<evidence type="ECO:0007744" key="6">
    <source>
    </source>
</evidence>
<evidence type="ECO:0007744" key="7">
    <source>
    </source>
</evidence>
<evidence type="ECO:0007829" key="8">
    <source>
        <dbReference type="PDB" id="7NAD"/>
    </source>
</evidence>
<evidence type="ECO:0007829" key="9">
    <source>
        <dbReference type="PDB" id="7NAF"/>
    </source>
</evidence>
<sequence>MAVHTNRQILTRGKNYATKQSKKFGTDEVTFDKDSRLDYLTGFHKRKLQRQKKAQEFIKEQERLRKIEERQKIRQERKEVMEEQLKTFKESLNLEAEIEDAKNDKTEDLQVESDESWHGFDSDKDDGDNDNNESSVKPILKKGAITEIYDDSTTVELETLEPNDNFEYLAQLNNVKLEKAEKVLKQSINRATKYAKFLGVDEKQKKKPRVKKFRYLTKNERRINQRKANDNKRRR</sequence>
<protein>
    <recommendedName>
        <fullName>Ribosomal RNA-processing protein 17</fullName>
    </recommendedName>
</protein>
<feature type="chain" id="PRO_0000253822" description="Ribosomal RNA-processing protein 17">
    <location>
        <begin position="1"/>
        <end position="235"/>
    </location>
</feature>
<feature type="region of interest" description="Disordered" evidence="2">
    <location>
        <begin position="99"/>
        <end position="138"/>
    </location>
</feature>
<feature type="region of interest" description="Disordered" evidence="2">
    <location>
        <begin position="209"/>
        <end position="235"/>
    </location>
</feature>
<feature type="coiled-coil region" evidence="1">
    <location>
        <begin position="49"/>
        <end position="110"/>
    </location>
</feature>
<feature type="compositionally biased region" description="Basic and acidic residues" evidence="2">
    <location>
        <begin position="99"/>
        <end position="108"/>
    </location>
</feature>
<feature type="compositionally biased region" description="Basic and acidic residues" evidence="2">
    <location>
        <begin position="217"/>
        <end position="235"/>
    </location>
</feature>
<feature type="modified residue" description="Phosphoserine" evidence="7">
    <location>
        <position position="113"/>
    </location>
</feature>
<feature type="modified residue" description="Phosphoserine" evidence="7">
    <location>
        <position position="116"/>
    </location>
</feature>
<feature type="modified residue" description="Phosphoserine" evidence="6 7">
    <location>
        <position position="122"/>
    </location>
</feature>
<feature type="strand" evidence="9">
    <location>
        <begin position="25"/>
        <end position="29"/>
    </location>
</feature>
<feature type="helix" evidence="8">
    <location>
        <begin position="33"/>
        <end position="41"/>
    </location>
</feature>
<feature type="helix" evidence="8">
    <location>
        <begin position="45"/>
        <end position="92"/>
    </location>
</feature>
<feature type="strand" evidence="8">
    <location>
        <begin position="145"/>
        <end position="148"/>
    </location>
</feature>
<feature type="strand" evidence="8">
    <location>
        <begin position="154"/>
        <end position="159"/>
    </location>
</feature>
<feature type="helix" evidence="8">
    <location>
        <begin position="165"/>
        <end position="179"/>
    </location>
</feature>
<feature type="helix" evidence="8">
    <location>
        <begin position="218"/>
        <end position="229"/>
    </location>
</feature>
<reference key="1">
    <citation type="journal article" date="1997" name="Nature">
        <title>The nucleotide sequence of Saccharomyces cerevisiae chromosome IV.</title>
        <authorList>
            <person name="Jacq C."/>
            <person name="Alt-Moerbe J."/>
            <person name="Andre B."/>
            <person name="Arnold W."/>
            <person name="Bahr A."/>
            <person name="Ballesta J.P.G."/>
            <person name="Bargues M."/>
            <person name="Baron L."/>
            <person name="Becker A."/>
            <person name="Biteau N."/>
            <person name="Bloecker H."/>
            <person name="Blugeon C."/>
            <person name="Boskovic J."/>
            <person name="Brandt P."/>
            <person name="Brueckner M."/>
            <person name="Buitrago M.J."/>
            <person name="Coster F."/>
            <person name="Delaveau T."/>
            <person name="del Rey F."/>
            <person name="Dujon B."/>
            <person name="Eide L.G."/>
            <person name="Garcia-Cantalejo J.M."/>
            <person name="Goffeau A."/>
            <person name="Gomez-Peris A."/>
            <person name="Granotier C."/>
            <person name="Hanemann V."/>
            <person name="Hankeln T."/>
            <person name="Hoheisel J.D."/>
            <person name="Jaeger W."/>
            <person name="Jimenez A."/>
            <person name="Jonniaux J.-L."/>
            <person name="Kraemer C."/>
            <person name="Kuester H."/>
            <person name="Laamanen P."/>
            <person name="Legros Y."/>
            <person name="Louis E.J."/>
            <person name="Moeller-Rieker S."/>
            <person name="Monnet A."/>
            <person name="Moro M."/>
            <person name="Mueller-Auer S."/>
            <person name="Nussbaumer B."/>
            <person name="Paricio N."/>
            <person name="Paulin L."/>
            <person name="Perea J."/>
            <person name="Perez-Alonso M."/>
            <person name="Perez-Ortin J.E."/>
            <person name="Pohl T.M."/>
            <person name="Prydz H."/>
            <person name="Purnelle B."/>
            <person name="Rasmussen S.W."/>
            <person name="Remacha M.A."/>
            <person name="Revuelta J.L."/>
            <person name="Rieger M."/>
            <person name="Salom D."/>
            <person name="Saluz H.P."/>
            <person name="Saiz J.E."/>
            <person name="Saren A.-M."/>
            <person name="Schaefer M."/>
            <person name="Scharfe M."/>
            <person name="Schmidt E.R."/>
            <person name="Schneider C."/>
            <person name="Scholler P."/>
            <person name="Schwarz S."/>
            <person name="Soler-Mira A."/>
            <person name="Urrestarazu L.A."/>
            <person name="Verhasselt P."/>
            <person name="Vissers S."/>
            <person name="Voet M."/>
            <person name="Volckaert G."/>
            <person name="Wagner G."/>
            <person name="Wambutt R."/>
            <person name="Wedler E."/>
            <person name="Wedler H."/>
            <person name="Woelfl S."/>
            <person name="Harris D.E."/>
            <person name="Bowman S."/>
            <person name="Brown D."/>
            <person name="Churcher C.M."/>
            <person name="Connor R."/>
            <person name="Dedman K."/>
            <person name="Gentles S."/>
            <person name="Hamlin N."/>
            <person name="Hunt S."/>
            <person name="Jones L."/>
            <person name="McDonald S."/>
            <person name="Murphy L.D."/>
            <person name="Niblett D."/>
            <person name="Odell C."/>
            <person name="Oliver K."/>
            <person name="Rajandream M.A."/>
            <person name="Richards C."/>
            <person name="Shore L."/>
            <person name="Walsh S.V."/>
            <person name="Barrell B.G."/>
            <person name="Dietrich F.S."/>
            <person name="Mulligan J.T."/>
            <person name="Allen E."/>
            <person name="Araujo R."/>
            <person name="Aviles E."/>
            <person name="Berno A."/>
            <person name="Carpenter J."/>
            <person name="Chen E."/>
            <person name="Cherry J.M."/>
            <person name="Chung E."/>
            <person name="Duncan M."/>
            <person name="Hunicke-Smith S."/>
            <person name="Hyman R.W."/>
            <person name="Komp C."/>
            <person name="Lashkari D."/>
            <person name="Lew H."/>
            <person name="Lin D."/>
            <person name="Mosedale D."/>
            <person name="Nakahara K."/>
            <person name="Namath A."/>
            <person name="Oefner P."/>
            <person name="Oh C."/>
            <person name="Petel F.X."/>
            <person name="Roberts D."/>
            <person name="Schramm S."/>
            <person name="Schroeder M."/>
            <person name="Shogren T."/>
            <person name="Shroff N."/>
            <person name="Winant A."/>
            <person name="Yelton M.A."/>
            <person name="Botstein D."/>
            <person name="Davis R.W."/>
            <person name="Johnston M."/>
            <person name="Andrews S."/>
            <person name="Brinkman R."/>
            <person name="Cooper J."/>
            <person name="Ding H."/>
            <person name="Du Z."/>
            <person name="Favello A."/>
            <person name="Fulton L."/>
            <person name="Gattung S."/>
            <person name="Greco T."/>
            <person name="Hallsworth K."/>
            <person name="Hawkins J."/>
            <person name="Hillier L.W."/>
            <person name="Jier M."/>
            <person name="Johnson D."/>
            <person name="Johnston L."/>
            <person name="Kirsten J."/>
            <person name="Kucaba T."/>
            <person name="Langston Y."/>
            <person name="Latreille P."/>
            <person name="Le T."/>
            <person name="Mardis E."/>
            <person name="Menezes S."/>
            <person name="Miller N."/>
            <person name="Nhan M."/>
            <person name="Pauley A."/>
            <person name="Peluso D."/>
            <person name="Rifkin L."/>
            <person name="Riles L."/>
            <person name="Taich A."/>
            <person name="Trevaskis E."/>
            <person name="Vignati D."/>
            <person name="Wilcox L."/>
            <person name="Wohldman P."/>
            <person name="Vaudin M."/>
            <person name="Wilson R."/>
            <person name="Waterston R."/>
            <person name="Albermann K."/>
            <person name="Hani J."/>
            <person name="Heumann K."/>
            <person name="Kleine K."/>
            <person name="Mewes H.-W."/>
            <person name="Zollner A."/>
            <person name="Zaccaria P."/>
        </authorList>
    </citation>
    <scope>NUCLEOTIDE SEQUENCE [LARGE SCALE GENOMIC DNA]</scope>
    <source>
        <strain>ATCC 204508 / S288c</strain>
    </source>
</reference>
<reference key="2">
    <citation type="journal article" date="2014" name="G3 (Bethesda)">
        <title>The reference genome sequence of Saccharomyces cerevisiae: Then and now.</title>
        <authorList>
            <person name="Engel S.R."/>
            <person name="Dietrich F.S."/>
            <person name="Fisk D.G."/>
            <person name="Binkley G."/>
            <person name="Balakrishnan R."/>
            <person name="Costanzo M.C."/>
            <person name="Dwight S.S."/>
            <person name="Hitz B.C."/>
            <person name="Karra K."/>
            <person name="Nash R.S."/>
            <person name="Weng S."/>
            <person name="Wong E.D."/>
            <person name="Lloyd P."/>
            <person name="Skrzypek M.S."/>
            <person name="Miyasato S.R."/>
            <person name="Simison M."/>
            <person name="Cherry J.M."/>
        </authorList>
    </citation>
    <scope>GENOME REANNOTATION</scope>
    <source>
        <strain>ATCC 204508 / S288c</strain>
    </source>
</reference>
<reference key="3">
    <citation type="journal article" date="2000" name="J. Cell Biol.">
        <title>The yeast nuclear pore complex: composition, architecture, and transport mechanism.</title>
        <authorList>
            <person name="Rout M.P."/>
            <person name="Aitchison J.D."/>
            <person name="Suprapto A."/>
            <person name="Hjertaas K."/>
            <person name="Zhao Y."/>
            <person name="Chait B.T."/>
        </authorList>
    </citation>
    <scope>IDENTIFICATION BY MASS SPECTROMETRY</scope>
</reference>
<reference key="4">
    <citation type="journal article" date="2003" name="Nature">
        <title>Global analysis of protein localization in budding yeast.</title>
        <authorList>
            <person name="Huh W.-K."/>
            <person name="Falvo J.V."/>
            <person name="Gerke L.C."/>
            <person name="Carroll A.S."/>
            <person name="Howson R.W."/>
            <person name="Weissman J.S."/>
            <person name="O'Shea E.K."/>
        </authorList>
    </citation>
    <scope>SUBCELLULAR LOCATION [LARGE SCALE ANALYSIS]</scope>
</reference>
<reference key="5">
    <citation type="journal article" date="2003" name="Nature">
        <title>Global analysis of protein expression in yeast.</title>
        <authorList>
            <person name="Ghaemmaghami S."/>
            <person name="Huh W.-K."/>
            <person name="Bower K."/>
            <person name="Howson R.W."/>
            <person name="Belle A."/>
            <person name="Dephoure N."/>
            <person name="O'Shea E.K."/>
            <person name="Weissman J.S."/>
        </authorList>
    </citation>
    <scope>LEVEL OF PROTEIN EXPRESSION [LARGE SCALE ANALYSIS]</scope>
</reference>
<reference key="6">
    <citation type="journal article" date="2007" name="J. Proteome Res.">
        <title>Large-scale phosphorylation analysis of alpha-factor-arrested Saccharomyces cerevisiae.</title>
        <authorList>
            <person name="Li X."/>
            <person name="Gerber S.A."/>
            <person name="Rudner A.D."/>
            <person name="Beausoleil S.A."/>
            <person name="Haas W."/>
            <person name="Villen J."/>
            <person name="Elias J.E."/>
            <person name="Gygi S.P."/>
        </authorList>
    </citation>
    <scope>PHOSPHORYLATION [LARGE SCALE ANALYSIS] AT SER-122</scope>
    <scope>IDENTIFICATION BY MASS SPECTROMETRY [LARGE SCALE ANALYSIS]</scope>
    <source>
        <strain>ADR376</strain>
    </source>
</reference>
<reference key="7">
    <citation type="journal article" date="2009" name="Science">
        <title>Global analysis of Cdk1 substrate phosphorylation sites provides insights into evolution.</title>
        <authorList>
            <person name="Holt L.J."/>
            <person name="Tuch B.B."/>
            <person name="Villen J."/>
            <person name="Johnson A.D."/>
            <person name="Gygi S.P."/>
            <person name="Morgan D.O."/>
        </authorList>
    </citation>
    <scope>PHOSPHORYLATION [LARGE SCALE ANALYSIS] AT SER-113; SER-116 AND SER-122</scope>
    <scope>IDENTIFICATION BY MASS SPECTROMETRY [LARGE SCALE ANALYSIS]</scope>
</reference>
<comment type="function">
    <text>Essential protein involved in ribosomal RNA processing.</text>
</comment>
<comment type="interaction">
    <interactant intactId="EBI-31091">
        <id>Q04031</id>
    </interactant>
    <interactant intactId="EBI-13715">
        <id>P32598</id>
        <label>GLC7</label>
    </interactant>
    <organismsDiffer>false</organismsDiffer>
    <experiments>3</experiments>
</comment>
<comment type="subcellular location">
    <subcellularLocation>
        <location evidence="3">Nucleus</location>
        <location evidence="3">Nucleolus</location>
    </subcellularLocation>
</comment>
<comment type="miscellaneous">
    <text evidence="4">Present with 2950 molecules/cell in log phase SD medium.</text>
</comment>
<comment type="similarity">
    <text evidence="5">Belongs to the RRP17 family.</text>
</comment>
<proteinExistence type="evidence at protein level"/>
<accession>Q04031</accession>
<accession>D6VT44</accession>
<name>RRP17_YEAST</name>
<dbReference type="EMBL" id="U33007">
    <property type="protein sequence ID" value="AAB64855.1"/>
    <property type="molecule type" value="Genomic_DNA"/>
</dbReference>
<dbReference type="EMBL" id="BK006938">
    <property type="protein sequence ID" value="DAA12254.1"/>
    <property type="molecule type" value="Genomic_DNA"/>
</dbReference>
<dbReference type="PIR" id="S69697">
    <property type="entry name" value="S69697"/>
</dbReference>
<dbReference type="RefSeq" id="NP_010700.3">
    <property type="nucleotide sequence ID" value="NM_001180720.3"/>
</dbReference>
<dbReference type="PDB" id="7NAC">
    <property type="method" value="EM"/>
    <property type="resolution" value="3.04 A"/>
    <property type="chains" value="5=1-235"/>
</dbReference>
<dbReference type="PDB" id="7NAD">
    <property type="method" value="EM"/>
    <property type="resolution" value="3.04 A"/>
    <property type="chains" value="5=1-235"/>
</dbReference>
<dbReference type="PDB" id="7NAF">
    <property type="method" value="EM"/>
    <property type="resolution" value="3.13 A"/>
    <property type="chains" value="5=6-95"/>
</dbReference>
<dbReference type="PDB" id="7R6K">
    <property type="method" value="EM"/>
    <property type="resolution" value="3.17 A"/>
    <property type="chains" value="5=215-222"/>
</dbReference>
<dbReference type="PDBsum" id="7NAC"/>
<dbReference type="PDBsum" id="7NAD"/>
<dbReference type="PDBsum" id="7NAF"/>
<dbReference type="PDBsum" id="7R6K"/>
<dbReference type="EMDB" id="EMD-24271"/>
<dbReference type="SMR" id="Q04031"/>
<dbReference type="BioGRID" id="32472">
    <property type="interactions" value="189"/>
</dbReference>
<dbReference type="DIP" id="DIP-1264N"/>
<dbReference type="FunCoup" id="Q04031">
    <property type="interactions" value="313"/>
</dbReference>
<dbReference type="IntAct" id="Q04031">
    <property type="interactions" value="53"/>
</dbReference>
<dbReference type="MINT" id="Q04031"/>
<dbReference type="STRING" id="4932.YDR412W"/>
<dbReference type="iPTMnet" id="Q04031"/>
<dbReference type="PaxDb" id="4932-YDR412W"/>
<dbReference type="PeptideAtlas" id="Q04031"/>
<dbReference type="EnsemblFungi" id="YDR412W_mRNA">
    <property type="protein sequence ID" value="YDR412W"/>
    <property type="gene ID" value="YDR412W"/>
</dbReference>
<dbReference type="GeneID" id="852021"/>
<dbReference type="KEGG" id="sce:YDR412W"/>
<dbReference type="AGR" id="SGD:S000002820"/>
<dbReference type="SGD" id="S000002820">
    <property type="gene designation" value="RRP17"/>
</dbReference>
<dbReference type="VEuPathDB" id="FungiDB:YDR412W"/>
<dbReference type="eggNOG" id="KOG4709">
    <property type="taxonomic scope" value="Eukaryota"/>
</dbReference>
<dbReference type="GeneTree" id="ENSGT00390000015973"/>
<dbReference type="HOGENOM" id="CLU_067149_0_0_1"/>
<dbReference type="InParanoid" id="Q04031"/>
<dbReference type="OMA" id="EWDGFPD"/>
<dbReference type="OrthoDB" id="551633at2759"/>
<dbReference type="BioCyc" id="YEAST:G3O-29955-MONOMER"/>
<dbReference type="BioGRID-ORCS" id="852021">
    <property type="hits" value="6 hits in 10 CRISPR screens"/>
</dbReference>
<dbReference type="PRO" id="PR:Q04031"/>
<dbReference type="Proteomes" id="UP000002311">
    <property type="component" value="Chromosome IV"/>
</dbReference>
<dbReference type="RNAct" id="Q04031">
    <property type="molecule type" value="protein"/>
</dbReference>
<dbReference type="GO" id="GO:0005737">
    <property type="term" value="C:cytoplasm"/>
    <property type="evidence" value="ECO:0000314"/>
    <property type="project" value="SGD"/>
</dbReference>
<dbReference type="GO" id="GO:0034399">
    <property type="term" value="C:nuclear periphery"/>
    <property type="evidence" value="ECO:0000314"/>
    <property type="project" value="SGD"/>
</dbReference>
<dbReference type="GO" id="GO:0005730">
    <property type="term" value="C:nucleolus"/>
    <property type="evidence" value="ECO:0000314"/>
    <property type="project" value="SGD"/>
</dbReference>
<dbReference type="GO" id="GO:0004534">
    <property type="term" value="F:5'-3' RNA exonuclease activity"/>
    <property type="evidence" value="ECO:0000314"/>
    <property type="project" value="SGD"/>
</dbReference>
<dbReference type="GO" id="GO:1990275">
    <property type="term" value="F:preribosome binding"/>
    <property type="evidence" value="ECO:0000314"/>
    <property type="project" value="SGD"/>
</dbReference>
<dbReference type="GO" id="GO:0019843">
    <property type="term" value="F:rRNA binding"/>
    <property type="evidence" value="ECO:0000318"/>
    <property type="project" value="GO_Central"/>
</dbReference>
<dbReference type="GO" id="GO:0000477">
    <property type="term" value="P:generation of mature 5'-end of LSU-rRNA from tricistronic rRNA transcript (SSU-rRNA, 5.8S rRNA, LSU-rRNA)"/>
    <property type="evidence" value="ECO:0000315"/>
    <property type="project" value="SGD"/>
</dbReference>
<dbReference type="GO" id="GO:0006364">
    <property type="term" value="P:rRNA processing"/>
    <property type="evidence" value="ECO:0000315"/>
    <property type="project" value="SGD"/>
</dbReference>
<dbReference type="InterPro" id="IPR019186">
    <property type="entry name" value="Nucleolar_protein_12"/>
</dbReference>
<dbReference type="PANTHER" id="PTHR14577">
    <property type="entry name" value="NUCLEOLAR PROTEIN 12"/>
    <property type="match status" value="1"/>
</dbReference>
<dbReference type="PANTHER" id="PTHR14577:SF0">
    <property type="entry name" value="NUCLEOLAR PROTEIN 12"/>
    <property type="match status" value="1"/>
</dbReference>
<dbReference type="Pfam" id="PF09805">
    <property type="entry name" value="Nop25"/>
    <property type="match status" value="1"/>
</dbReference>
<keyword id="KW-0002">3D-structure</keyword>
<keyword id="KW-0175">Coiled coil</keyword>
<keyword id="KW-0539">Nucleus</keyword>
<keyword id="KW-0597">Phosphoprotein</keyword>
<keyword id="KW-1185">Reference proteome</keyword>
<keyword id="KW-0690">Ribosome biogenesis</keyword>
<keyword id="KW-0698">rRNA processing</keyword>
<gene>
    <name type="primary">RRP17</name>
    <name type="ordered locus">YDR412W</name>
</gene>